<sequence>MIGRLRGIILEKQPPLVLLETGGVGYEVHMPMTCFYELPDAGKEAIIFTQFVVREDAQLLYGFNNKQERMLFRELIKTNGVGPKLALAILSGMSAHQFVNAVEREDPAALIKLPGIGKKTAERLIVEMKDRFKGLHGDLFTPAADLVLTSPNGPTSDDAEQEAVAALVALGYKPQEASRMVSKIAKPDANSETLIREALRAAL</sequence>
<keyword id="KW-0963">Cytoplasm</keyword>
<keyword id="KW-0227">DNA damage</keyword>
<keyword id="KW-0233">DNA recombination</keyword>
<keyword id="KW-0234">DNA repair</keyword>
<keyword id="KW-0238">DNA-binding</keyword>
<reference key="1">
    <citation type="journal article" date="2010" name="PLoS Genet.">
        <title>Genome sequence of the plant growth promoting endophytic bacterium Enterobacter sp. 638.</title>
        <authorList>
            <person name="Taghavi S."/>
            <person name="van der Lelie D."/>
            <person name="Hoffman A."/>
            <person name="Zhang Y.B."/>
            <person name="Walla M.D."/>
            <person name="Vangronsveld J."/>
            <person name="Newman L."/>
            <person name="Monchy S."/>
        </authorList>
    </citation>
    <scope>NUCLEOTIDE SEQUENCE [LARGE SCALE GENOMIC DNA]</scope>
    <source>
        <strain>638</strain>
    </source>
</reference>
<evidence type="ECO:0000255" key="1">
    <source>
        <dbReference type="HAMAP-Rule" id="MF_00031"/>
    </source>
</evidence>
<feature type="chain" id="PRO_1000057238" description="Holliday junction branch migration complex subunit RuvA">
    <location>
        <begin position="1"/>
        <end position="203"/>
    </location>
</feature>
<feature type="region of interest" description="Domain I" evidence="1">
    <location>
        <begin position="1"/>
        <end position="64"/>
    </location>
</feature>
<feature type="region of interest" description="Domain II" evidence="1">
    <location>
        <begin position="65"/>
        <end position="142"/>
    </location>
</feature>
<feature type="region of interest" description="Flexible linker" evidence="1">
    <location>
        <begin position="143"/>
        <end position="154"/>
    </location>
</feature>
<feature type="region of interest" description="Domain III" evidence="1">
    <location>
        <begin position="155"/>
        <end position="203"/>
    </location>
</feature>
<name>RUVA_ENT38</name>
<organism>
    <name type="scientific">Enterobacter sp. (strain 638)</name>
    <dbReference type="NCBI Taxonomy" id="399742"/>
    <lineage>
        <taxon>Bacteria</taxon>
        <taxon>Pseudomonadati</taxon>
        <taxon>Pseudomonadota</taxon>
        <taxon>Gammaproteobacteria</taxon>
        <taxon>Enterobacterales</taxon>
        <taxon>Enterobacteriaceae</taxon>
        <taxon>Enterobacter</taxon>
    </lineage>
</organism>
<proteinExistence type="inferred from homology"/>
<comment type="function">
    <text evidence="1">The RuvA-RuvB-RuvC complex processes Holliday junction (HJ) DNA during genetic recombination and DNA repair, while the RuvA-RuvB complex plays an important role in the rescue of blocked DNA replication forks via replication fork reversal (RFR). RuvA specifically binds to HJ cruciform DNA, conferring on it an open structure. The RuvB hexamer acts as an ATP-dependent pump, pulling dsDNA into and through the RuvAB complex. HJ branch migration allows RuvC to scan DNA until it finds its consensus sequence, where it cleaves and resolves the cruciform DNA.</text>
</comment>
<comment type="subunit">
    <text evidence="1">Homotetramer. Forms an RuvA(8)-RuvB(12)-Holliday junction (HJ) complex. HJ DNA is sandwiched between 2 RuvA tetramers; dsDNA enters through RuvA and exits via RuvB. An RuvB hexamer assembles on each DNA strand where it exits the tetramer. Each RuvB hexamer is contacted by two RuvA subunits (via domain III) on 2 adjacent RuvB subunits; this complex drives branch migration. In the full resolvosome a probable DNA-RuvA(4)-RuvB(12)-RuvC(2) complex forms which resolves the HJ.</text>
</comment>
<comment type="subcellular location">
    <subcellularLocation>
        <location evidence="1">Cytoplasm</location>
    </subcellularLocation>
</comment>
<comment type="domain">
    <text evidence="1">Has three domains with a flexible linker between the domains II and III and assumes an 'L' shape. Domain III is highly mobile and contacts RuvB.</text>
</comment>
<comment type="similarity">
    <text evidence="1">Belongs to the RuvA family.</text>
</comment>
<gene>
    <name evidence="1" type="primary">ruvA</name>
    <name type="ordered locus">Ent638_2430</name>
</gene>
<dbReference type="EMBL" id="CP000653">
    <property type="protein sequence ID" value="ABP61099.1"/>
    <property type="molecule type" value="Genomic_DNA"/>
</dbReference>
<dbReference type="RefSeq" id="WP_015959432.1">
    <property type="nucleotide sequence ID" value="NC_009436.1"/>
</dbReference>
<dbReference type="SMR" id="A4WBL9"/>
<dbReference type="STRING" id="399742.Ent638_2430"/>
<dbReference type="KEGG" id="ent:Ent638_2430"/>
<dbReference type="eggNOG" id="COG0632">
    <property type="taxonomic scope" value="Bacteria"/>
</dbReference>
<dbReference type="HOGENOM" id="CLU_087936_0_0_6"/>
<dbReference type="OrthoDB" id="5293449at2"/>
<dbReference type="Proteomes" id="UP000000230">
    <property type="component" value="Chromosome"/>
</dbReference>
<dbReference type="GO" id="GO:0005737">
    <property type="term" value="C:cytoplasm"/>
    <property type="evidence" value="ECO:0007669"/>
    <property type="project" value="UniProtKB-SubCell"/>
</dbReference>
<dbReference type="GO" id="GO:0009379">
    <property type="term" value="C:Holliday junction helicase complex"/>
    <property type="evidence" value="ECO:0007669"/>
    <property type="project" value="InterPro"/>
</dbReference>
<dbReference type="GO" id="GO:0048476">
    <property type="term" value="C:Holliday junction resolvase complex"/>
    <property type="evidence" value="ECO:0007669"/>
    <property type="project" value="UniProtKB-UniRule"/>
</dbReference>
<dbReference type="GO" id="GO:0005524">
    <property type="term" value="F:ATP binding"/>
    <property type="evidence" value="ECO:0007669"/>
    <property type="project" value="InterPro"/>
</dbReference>
<dbReference type="GO" id="GO:0000400">
    <property type="term" value="F:four-way junction DNA binding"/>
    <property type="evidence" value="ECO:0007669"/>
    <property type="project" value="UniProtKB-UniRule"/>
</dbReference>
<dbReference type="GO" id="GO:0009378">
    <property type="term" value="F:four-way junction helicase activity"/>
    <property type="evidence" value="ECO:0007669"/>
    <property type="project" value="InterPro"/>
</dbReference>
<dbReference type="GO" id="GO:0006310">
    <property type="term" value="P:DNA recombination"/>
    <property type="evidence" value="ECO:0007669"/>
    <property type="project" value="UniProtKB-UniRule"/>
</dbReference>
<dbReference type="GO" id="GO:0006281">
    <property type="term" value="P:DNA repair"/>
    <property type="evidence" value="ECO:0007669"/>
    <property type="project" value="UniProtKB-UniRule"/>
</dbReference>
<dbReference type="CDD" id="cd14332">
    <property type="entry name" value="UBA_RuvA_C"/>
    <property type="match status" value="1"/>
</dbReference>
<dbReference type="FunFam" id="1.10.150.20:FF:000012">
    <property type="entry name" value="Holliday junction ATP-dependent DNA helicase RuvA"/>
    <property type="match status" value="1"/>
</dbReference>
<dbReference type="FunFam" id="1.10.8.10:FF:000008">
    <property type="entry name" value="Holliday junction ATP-dependent DNA helicase RuvA"/>
    <property type="match status" value="1"/>
</dbReference>
<dbReference type="FunFam" id="2.40.50.140:FF:000083">
    <property type="entry name" value="Holliday junction ATP-dependent DNA helicase RuvA"/>
    <property type="match status" value="1"/>
</dbReference>
<dbReference type="Gene3D" id="1.10.150.20">
    <property type="entry name" value="5' to 3' exonuclease, C-terminal subdomain"/>
    <property type="match status" value="1"/>
</dbReference>
<dbReference type="Gene3D" id="1.10.8.10">
    <property type="entry name" value="DNA helicase RuvA subunit, C-terminal domain"/>
    <property type="match status" value="1"/>
</dbReference>
<dbReference type="Gene3D" id="2.40.50.140">
    <property type="entry name" value="Nucleic acid-binding proteins"/>
    <property type="match status" value="1"/>
</dbReference>
<dbReference type="HAMAP" id="MF_00031">
    <property type="entry name" value="DNA_HJ_migration_RuvA"/>
    <property type="match status" value="1"/>
</dbReference>
<dbReference type="InterPro" id="IPR013849">
    <property type="entry name" value="DNA_helicase_Holl-junc_RuvA_I"/>
</dbReference>
<dbReference type="InterPro" id="IPR003583">
    <property type="entry name" value="Hlx-hairpin-Hlx_DNA-bd_motif"/>
</dbReference>
<dbReference type="InterPro" id="IPR012340">
    <property type="entry name" value="NA-bd_OB-fold"/>
</dbReference>
<dbReference type="InterPro" id="IPR000085">
    <property type="entry name" value="RuvA"/>
</dbReference>
<dbReference type="InterPro" id="IPR010994">
    <property type="entry name" value="RuvA_2-like"/>
</dbReference>
<dbReference type="InterPro" id="IPR011114">
    <property type="entry name" value="RuvA_C"/>
</dbReference>
<dbReference type="InterPro" id="IPR036267">
    <property type="entry name" value="RuvA_C_sf"/>
</dbReference>
<dbReference type="NCBIfam" id="TIGR00084">
    <property type="entry name" value="ruvA"/>
    <property type="match status" value="1"/>
</dbReference>
<dbReference type="Pfam" id="PF14520">
    <property type="entry name" value="HHH_5"/>
    <property type="match status" value="1"/>
</dbReference>
<dbReference type="Pfam" id="PF07499">
    <property type="entry name" value="RuvA_C"/>
    <property type="match status" value="1"/>
</dbReference>
<dbReference type="Pfam" id="PF01330">
    <property type="entry name" value="RuvA_N"/>
    <property type="match status" value="1"/>
</dbReference>
<dbReference type="SMART" id="SM00278">
    <property type="entry name" value="HhH1"/>
    <property type="match status" value="2"/>
</dbReference>
<dbReference type="SUPFAM" id="SSF46929">
    <property type="entry name" value="DNA helicase RuvA subunit, C-terminal domain"/>
    <property type="match status" value="1"/>
</dbReference>
<dbReference type="SUPFAM" id="SSF50249">
    <property type="entry name" value="Nucleic acid-binding proteins"/>
    <property type="match status" value="1"/>
</dbReference>
<dbReference type="SUPFAM" id="SSF47781">
    <property type="entry name" value="RuvA domain 2-like"/>
    <property type="match status" value="1"/>
</dbReference>
<protein>
    <recommendedName>
        <fullName evidence="1">Holliday junction branch migration complex subunit RuvA</fullName>
    </recommendedName>
</protein>
<accession>A4WBL9</accession>